<organism>
    <name type="scientific">Synechococcus sp. (strain JA-3-3Ab)</name>
    <name type="common">Cyanobacteria bacterium Yellowstone A-Prime</name>
    <dbReference type="NCBI Taxonomy" id="321327"/>
    <lineage>
        <taxon>Bacteria</taxon>
        <taxon>Bacillati</taxon>
        <taxon>Cyanobacteriota</taxon>
        <taxon>Cyanophyceae</taxon>
        <taxon>Synechococcales</taxon>
        <taxon>Synechococcaceae</taxon>
        <taxon>Synechococcus</taxon>
    </lineage>
</organism>
<evidence type="ECO:0000255" key="1">
    <source>
        <dbReference type="HAMAP-Rule" id="MF_01363"/>
    </source>
</evidence>
<evidence type="ECO:0000256" key="2">
    <source>
        <dbReference type="SAM" id="MobiDB-lite"/>
    </source>
</evidence>
<evidence type="ECO:0000305" key="3"/>
<comment type="function">
    <text evidence="1">This protein binds to 23S rRNA in the presence of protein L20.</text>
</comment>
<comment type="subunit">
    <text evidence="1">Part of the 50S ribosomal subunit. Contacts protein L20.</text>
</comment>
<comment type="similarity">
    <text evidence="1">Belongs to the bacterial ribosomal protein bL21 family.</text>
</comment>
<reference key="1">
    <citation type="journal article" date="2007" name="ISME J.">
        <title>Population level functional diversity in a microbial community revealed by comparative genomic and metagenomic analyses.</title>
        <authorList>
            <person name="Bhaya D."/>
            <person name="Grossman A.R."/>
            <person name="Steunou A.-S."/>
            <person name="Khuri N."/>
            <person name="Cohan F.M."/>
            <person name="Hamamura N."/>
            <person name="Melendrez M.C."/>
            <person name="Bateson M.M."/>
            <person name="Ward D.M."/>
            <person name="Heidelberg J.F."/>
        </authorList>
    </citation>
    <scope>NUCLEOTIDE SEQUENCE [LARGE SCALE GENOMIC DNA]</scope>
    <source>
        <strain>JA-3-3Ab</strain>
    </source>
</reference>
<keyword id="KW-0687">Ribonucleoprotein</keyword>
<keyword id="KW-0689">Ribosomal protein</keyword>
<keyword id="KW-0694">RNA-binding</keyword>
<keyword id="KW-0699">rRNA-binding</keyword>
<sequence>MTYAIVETSGKQLWVEPGRFYDVDRLPGTEENSPLALSQVLLINHEGQVTLGHPYVPEAVVRARVLQHRRGNKIIVYKMRPKKGTRKKRGHRQPLTRVLIESIELNGTTLATAQSAPPSTSEATTDTTGIPAAEE</sequence>
<gene>
    <name evidence="1" type="primary">rplU</name>
    <name evidence="1" type="synonym">rpl21</name>
    <name type="ordered locus">CYA_2052</name>
</gene>
<accession>Q2JT18</accession>
<protein>
    <recommendedName>
        <fullName evidence="1">Large ribosomal subunit protein bL21</fullName>
    </recommendedName>
    <alternativeName>
        <fullName evidence="3">50S ribosomal protein L21</fullName>
    </alternativeName>
</protein>
<name>RL21_SYNJA</name>
<feature type="chain" id="PRO_0000269411" description="Large ribosomal subunit protein bL21">
    <location>
        <begin position="1"/>
        <end position="135"/>
    </location>
</feature>
<feature type="region of interest" description="Disordered" evidence="2">
    <location>
        <begin position="109"/>
        <end position="135"/>
    </location>
</feature>
<feature type="compositionally biased region" description="Polar residues" evidence="2">
    <location>
        <begin position="109"/>
        <end position="128"/>
    </location>
</feature>
<dbReference type="EMBL" id="CP000239">
    <property type="protein sequence ID" value="ABD00192.1"/>
    <property type="molecule type" value="Genomic_DNA"/>
</dbReference>
<dbReference type="RefSeq" id="WP_011430866.1">
    <property type="nucleotide sequence ID" value="NC_007775.1"/>
</dbReference>
<dbReference type="SMR" id="Q2JT18"/>
<dbReference type="STRING" id="321327.CYA_2052"/>
<dbReference type="KEGG" id="cya:CYA_2052"/>
<dbReference type="eggNOG" id="COG0261">
    <property type="taxonomic scope" value="Bacteria"/>
</dbReference>
<dbReference type="HOGENOM" id="CLU_061463_1_2_3"/>
<dbReference type="OrthoDB" id="9813334at2"/>
<dbReference type="Proteomes" id="UP000008818">
    <property type="component" value="Chromosome"/>
</dbReference>
<dbReference type="GO" id="GO:0005737">
    <property type="term" value="C:cytoplasm"/>
    <property type="evidence" value="ECO:0007669"/>
    <property type="project" value="UniProtKB-ARBA"/>
</dbReference>
<dbReference type="GO" id="GO:1990904">
    <property type="term" value="C:ribonucleoprotein complex"/>
    <property type="evidence" value="ECO:0007669"/>
    <property type="project" value="UniProtKB-KW"/>
</dbReference>
<dbReference type="GO" id="GO:0005840">
    <property type="term" value="C:ribosome"/>
    <property type="evidence" value="ECO:0007669"/>
    <property type="project" value="UniProtKB-KW"/>
</dbReference>
<dbReference type="GO" id="GO:0019843">
    <property type="term" value="F:rRNA binding"/>
    <property type="evidence" value="ECO:0007669"/>
    <property type="project" value="UniProtKB-UniRule"/>
</dbReference>
<dbReference type="GO" id="GO:0003735">
    <property type="term" value="F:structural constituent of ribosome"/>
    <property type="evidence" value="ECO:0007669"/>
    <property type="project" value="InterPro"/>
</dbReference>
<dbReference type="GO" id="GO:0006412">
    <property type="term" value="P:translation"/>
    <property type="evidence" value="ECO:0007669"/>
    <property type="project" value="UniProtKB-UniRule"/>
</dbReference>
<dbReference type="HAMAP" id="MF_01363">
    <property type="entry name" value="Ribosomal_bL21"/>
    <property type="match status" value="1"/>
</dbReference>
<dbReference type="InterPro" id="IPR028909">
    <property type="entry name" value="bL21-like"/>
</dbReference>
<dbReference type="InterPro" id="IPR036164">
    <property type="entry name" value="bL21-like_sf"/>
</dbReference>
<dbReference type="InterPro" id="IPR001787">
    <property type="entry name" value="Ribosomal_bL21"/>
</dbReference>
<dbReference type="InterPro" id="IPR018258">
    <property type="entry name" value="Ribosomal_bL21_CS"/>
</dbReference>
<dbReference type="NCBIfam" id="TIGR00061">
    <property type="entry name" value="L21"/>
    <property type="match status" value="1"/>
</dbReference>
<dbReference type="PANTHER" id="PTHR21349">
    <property type="entry name" value="50S RIBOSOMAL PROTEIN L21"/>
    <property type="match status" value="1"/>
</dbReference>
<dbReference type="PANTHER" id="PTHR21349:SF0">
    <property type="entry name" value="LARGE RIBOSOMAL SUBUNIT PROTEIN BL21M"/>
    <property type="match status" value="1"/>
</dbReference>
<dbReference type="Pfam" id="PF00829">
    <property type="entry name" value="Ribosomal_L21p"/>
    <property type="match status" value="1"/>
</dbReference>
<dbReference type="SUPFAM" id="SSF141091">
    <property type="entry name" value="L21p-like"/>
    <property type="match status" value="1"/>
</dbReference>
<dbReference type="PROSITE" id="PS01169">
    <property type="entry name" value="RIBOSOMAL_L21"/>
    <property type="match status" value="1"/>
</dbReference>
<proteinExistence type="inferred from homology"/>